<reference key="1">
    <citation type="journal article" date="2008" name="J. Biotechnol.">
        <title>The genome of Xanthomonas campestris pv. campestris B100 and its use for the reconstruction of metabolic pathways involved in xanthan biosynthesis.</title>
        <authorList>
            <person name="Vorhoelter F.-J."/>
            <person name="Schneiker S."/>
            <person name="Goesmann A."/>
            <person name="Krause L."/>
            <person name="Bekel T."/>
            <person name="Kaiser O."/>
            <person name="Linke B."/>
            <person name="Patschkowski T."/>
            <person name="Rueckert C."/>
            <person name="Schmid J."/>
            <person name="Sidhu V.K."/>
            <person name="Sieber V."/>
            <person name="Tauch A."/>
            <person name="Watt S.A."/>
            <person name="Weisshaar B."/>
            <person name="Becker A."/>
            <person name="Niehaus K."/>
            <person name="Puehler A."/>
        </authorList>
    </citation>
    <scope>NUCLEOTIDE SEQUENCE [LARGE SCALE GENOMIC DNA]</scope>
    <source>
        <strain>B100</strain>
    </source>
</reference>
<organism>
    <name type="scientific">Xanthomonas campestris pv. campestris (strain B100)</name>
    <dbReference type="NCBI Taxonomy" id="509169"/>
    <lineage>
        <taxon>Bacteria</taxon>
        <taxon>Pseudomonadati</taxon>
        <taxon>Pseudomonadota</taxon>
        <taxon>Gammaproteobacteria</taxon>
        <taxon>Lysobacterales</taxon>
        <taxon>Lysobacteraceae</taxon>
        <taxon>Xanthomonas</taxon>
    </lineage>
</organism>
<dbReference type="EC" id="3.1.3.77" evidence="1"/>
<dbReference type="EMBL" id="AM920689">
    <property type="protein sequence ID" value="CAP51458.1"/>
    <property type="molecule type" value="Genomic_DNA"/>
</dbReference>
<dbReference type="SMR" id="B0RSM3"/>
<dbReference type="KEGG" id="xca:xcc-b100_2105"/>
<dbReference type="HOGENOM" id="CLU_023273_0_0_6"/>
<dbReference type="UniPathway" id="UPA00904">
    <property type="reaction ID" value="UER00876"/>
</dbReference>
<dbReference type="UniPathway" id="UPA00904">
    <property type="reaction ID" value="UER00877"/>
</dbReference>
<dbReference type="Proteomes" id="UP000001188">
    <property type="component" value="Chromosome"/>
</dbReference>
<dbReference type="GO" id="GO:0043715">
    <property type="term" value="F:2,3-diketo-5-methylthiopentyl-1-phosphate enolase activity"/>
    <property type="evidence" value="ECO:0007669"/>
    <property type="project" value="UniProtKB-UniRule"/>
</dbReference>
<dbReference type="GO" id="GO:0043716">
    <property type="term" value="F:2-hydroxy-3-keto-5-methylthiopentenyl-1-phosphate phosphatase activity"/>
    <property type="evidence" value="ECO:0007669"/>
    <property type="project" value="UniProtKB-UniRule"/>
</dbReference>
<dbReference type="GO" id="GO:0043874">
    <property type="term" value="F:acireductone synthase activity"/>
    <property type="evidence" value="ECO:0007669"/>
    <property type="project" value="UniProtKB-EC"/>
</dbReference>
<dbReference type="GO" id="GO:0000287">
    <property type="term" value="F:magnesium ion binding"/>
    <property type="evidence" value="ECO:0007669"/>
    <property type="project" value="UniProtKB-UniRule"/>
</dbReference>
<dbReference type="GO" id="GO:0019509">
    <property type="term" value="P:L-methionine salvage from methylthioadenosine"/>
    <property type="evidence" value="ECO:0007669"/>
    <property type="project" value="UniProtKB-UniRule"/>
</dbReference>
<dbReference type="CDD" id="cd01629">
    <property type="entry name" value="HAD_EP"/>
    <property type="match status" value="1"/>
</dbReference>
<dbReference type="FunFam" id="1.10.720.60:FF:000003">
    <property type="entry name" value="Enolase-phosphatase E1"/>
    <property type="match status" value="1"/>
</dbReference>
<dbReference type="FunFam" id="3.40.50.1000:FF:000079">
    <property type="entry name" value="Enolase-phosphatase E1"/>
    <property type="match status" value="1"/>
</dbReference>
<dbReference type="Gene3D" id="1.10.720.60">
    <property type="match status" value="1"/>
</dbReference>
<dbReference type="Gene3D" id="3.40.50.1000">
    <property type="entry name" value="HAD superfamily/HAD-like"/>
    <property type="match status" value="1"/>
</dbReference>
<dbReference type="HAMAP" id="MF_01681">
    <property type="entry name" value="Salvage_MtnC"/>
    <property type="match status" value="1"/>
</dbReference>
<dbReference type="InterPro" id="IPR023943">
    <property type="entry name" value="Enolase-ppase_E1"/>
</dbReference>
<dbReference type="InterPro" id="IPR036412">
    <property type="entry name" value="HAD-like_sf"/>
</dbReference>
<dbReference type="InterPro" id="IPR006439">
    <property type="entry name" value="HAD-SF_hydro_IA"/>
</dbReference>
<dbReference type="InterPro" id="IPR023214">
    <property type="entry name" value="HAD_sf"/>
</dbReference>
<dbReference type="NCBIfam" id="TIGR01691">
    <property type="entry name" value="enolase-ppase"/>
    <property type="match status" value="1"/>
</dbReference>
<dbReference type="NCBIfam" id="TIGR01549">
    <property type="entry name" value="HAD-SF-IA-v1"/>
    <property type="match status" value="1"/>
</dbReference>
<dbReference type="PANTHER" id="PTHR20371">
    <property type="entry name" value="ENOLASE-PHOSPHATASE E1"/>
    <property type="match status" value="1"/>
</dbReference>
<dbReference type="PANTHER" id="PTHR20371:SF1">
    <property type="entry name" value="ENOLASE-PHOSPHATASE E1"/>
    <property type="match status" value="1"/>
</dbReference>
<dbReference type="Pfam" id="PF00702">
    <property type="entry name" value="Hydrolase"/>
    <property type="match status" value="1"/>
</dbReference>
<dbReference type="SFLD" id="SFLDG01133">
    <property type="entry name" value="C1.5.4:_Enolase-phosphatase_Li"/>
    <property type="match status" value="1"/>
</dbReference>
<dbReference type="SFLD" id="SFLDF00044">
    <property type="entry name" value="enolase-phosphatase"/>
    <property type="match status" value="1"/>
</dbReference>
<dbReference type="SUPFAM" id="SSF56784">
    <property type="entry name" value="HAD-like"/>
    <property type="match status" value="1"/>
</dbReference>
<feature type="chain" id="PRO_0000357430" description="Enolase-phosphatase E1">
    <location>
        <begin position="1"/>
        <end position="232"/>
    </location>
</feature>
<gene>
    <name evidence="1" type="primary">mtnC</name>
    <name type="ordered locus">xcc-b100_2105</name>
</gene>
<accession>B0RSM3</accession>
<evidence type="ECO:0000255" key="1">
    <source>
        <dbReference type="HAMAP-Rule" id="MF_01681"/>
    </source>
</evidence>
<sequence>MTRPQAILTDIEGTTSSISFVKDVLFPYARRAMPAYVREHGGHPQVRHWLNQVADEIGEDVPDEVLITTLQTWIDEDRKHTALKALQGMIWEDGYRTADFSAHIYADAAIQLQAWHAEGIPLYVYSSGSVPAQKLFFAHSDAGDLSGLVSDWFDTEVGPKRESSSYRRIAERIGVPAPEILFLSDVIEELDAAKRAGMRTALLDRLEDYPTPRSADDVGSHQRVESFTQLVL</sequence>
<proteinExistence type="inferred from homology"/>
<comment type="function">
    <text evidence="1">Bifunctional enzyme that catalyzes the enolization of 2,3-diketo-5-methylthiopentyl-1-phosphate (DK-MTP-1-P) into the intermediate 2-hydroxy-3-keto-5-methylthiopentenyl-1-phosphate (HK-MTPenyl-1-P), which is then dephosphorylated to form the acireductone 1,2-dihydroxy-3-keto-5-methylthiopentene (DHK-MTPene).</text>
</comment>
<comment type="catalytic activity">
    <reaction evidence="1">
        <text>5-methylsulfanyl-2,3-dioxopentyl phosphate + H2O = 1,2-dihydroxy-5-(methylsulfanyl)pent-1-en-3-one + phosphate</text>
        <dbReference type="Rhea" id="RHEA:21700"/>
        <dbReference type="ChEBI" id="CHEBI:15377"/>
        <dbReference type="ChEBI" id="CHEBI:43474"/>
        <dbReference type="ChEBI" id="CHEBI:49252"/>
        <dbReference type="ChEBI" id="CHEBI:58828"/>
        <dbReference type="EC" id="3.1.3.77"/>
    </reaction>
</comment>
<comment type="cofactor">
    <cofactor evidence="1">
        <name>Mg(2+)</name>
        <dbReference type="ChEBI" id="CHEBI:18420"/>
    </cofactor>
    <text evidence="1">Binds 1 Mg(2+) ion per subunit.</text>
</comment>
<comment type="pathway">
    <text evidence="1">Amino-acid biosynthesis; L-methionine biosynthesis via salvage pathway; L-methionine from S-methyl-5-thio-alpha-D-ribose 1-phosphate: step 3/6.</text>
</comment>
<comment type="pathway">
    <text evidence="1">Amino-acid biosynthesis; L-methionine biosynthesis via salvage pathway; L-methionine from S-methyl-5-thio-alpha-D-ribose 1-phosphate: step 4/6.</text>
</comment>
<comment type="subunit">
    <text evidence="1">Monomer.</text>
</comment>
<comment type="similarity">
    <text evidence="1">Belongs to the HAD-like hydrolase superfamily. MasA/MtnC family.</text>
</comment>
<protein>
    <recommendedName>
        <fullName evidence="1">Enolase-phosphatase E1</fullName>
        <ecNumber evidence="1">3.1.3.77</ecNumber>
    </recommendedName>
    <alternativeName>
        <fullName evidence="1">2,3-diketo-5-methylthio-1-phosphopentane phosphatase</fullName>
    </alternativeName>
</protein>
<keyword id="KW-0028">Amino-acid biosynthesis</keyword>
<keyword id="KW-0378">Hydrolase</keyword>
<keyword id="KW-0460">Magnesium</keyword>
<keyword id="KW-0479">Metal-binding</keyword>
<keyword id="KW-0486">Methionine biosynthesis</keyword>
<name>MTNC_XANCB</name>